<keyword id="KW-0044">Antibiotic</keyword>
<keyword id="KW-0929">Antimicrobial</keyword>
<keyword id="KW-0903">Direct protein sequencing</keyword>
<keyword id="KW-1015">Disulfide bond</keyword>
<keyword id="KW-0295">Fungicide</keyword>
<keyword id="KW-0611">Plant defense</keyword>
<keyword id="KW-0964">Secreted</keyword>
<evidence type="ECO:0000250" key="1">
    <source>
        <dbReference type="UniProtKB" id="P69241"/>
    </source>
</evidence>
<evidence type="ECO:0000255" key="2"/>
<evidence type="ECO:0000269" key="3">
    <source>
    </source>
</evidence>
<evidence type="ECO:0000303" key="4">
    <source>
    </source>
</evidence>
<evidence type="ECO:0000305" key="5"/>
<name>DEF2_NIGSA</name>
<dbReference type="SMR" id="P86973"/>
<dbReference type="GO" id="GO:0005576">
    <property type="term" value="C:extracellular region"/>
    <property type="evidence" value="ECO:0007669"/>
    <property type="project" value="UniProtKB-SubCell"/>
</dbReference>
<dbReference type="GO" id="GO:0050832">
    <property type="term" value="P:defense response to fungus"/>
    <property type="evidence" value="ECO:0000314"/>
    <property type="project" value="UniProtKB"/>
</dbReference>
<dbReference type="GO" id="GO:0050829">
    <property type="term" value="P:defense response to Gram-negative bacterium"/>
    <property type="evidence" value="ECO:0000314"/>
    <property type="project" value="UniProtKB"/>
</dbReference>
<dbReference type="GO" id="GO:0050830">
    <property type="term" value="P:defense response to Gram-positive bacterium"/>
    <property type="evidence" value="ECO:0000314"/>
    <property type="project" value="UniProtKB"/>
</dbReference>
<dbReference type="GO" id="GO:0031640">
    <property type="term" value="P:killing of cells of another organism"/>
    <property type="evidence" value="ECO:0000314"/>
    <property type="project" value="UniProtKB"/>
</dbReference>
<dbReference type="FunFam" id="3.30.30.10:FF:000003">
    <property type="entry name" value="Defensin-like protein 1"/>
    <property type="match status" value="1"/>
</dbReference>
<dbReference type="Gene3D" id="3.30.30.10">
    <property type="entry name" value="Knottin, scorpion toxin-like"/>
    <property type="match status" value="1"/>
</dbReference>
<dbReference type="InterPro" id="IPR008176">
    <property type="entry name" value="Defensin_plant"/>
</dbReference>
<dbReference type="InterPro" id="IPR003614">
    <property type="entry name" value="Scorpion_toxin-like"/>
</dbReference>
<dbReference type="InterPro" id="IPR036574">
    <property type="entry name" value="Scorpion_toxin-like_sf"/>
</dbReference>
<dbReference type="Pfam" id="PF00304">
    <property type="entry name" value="Gamma-thionin"/>
    <property type="match status" value="1"/>
</dbReference>
<dbReference type="SMART" id="SM00505">
    <property type="entry name" value="Knot1"/>
    <property type="match status" value="1"/>
</dbReference>
<dbReference type="SUPFAM" id="SSF57095">
    <property type="entry name" value="Scorpion toxin-like"/>
    <property type="match status" value="1"/>
</dbReference>
<dbReference type="PROSITE" id="PS00940">
    <property type="entry name" value="GAMMA_THIONIN"/>
    <property type="match status" value="1"/>
</dbReference>
<reference evidence="5" key="1">
    <citation type="journal article" date="2011" name="Plant Physiol. Biochem.">
        <title>Novel antifungal defensins from Nigella sativa L. seeds.</title>
        <authorList>
            <person name="Rogozhin E.A."/>
            <person name="Oshchepkova Y.I."/>
            <person name="Odintsova T.I."/>
            <person name="Khadeeva N.V."/>
            <person name="Veshkurova O.N."/>
            <person name="Egorov T.A."/>
            <person name="Grishin E.V."/>
            <person name="Salikhov S.I."/>
        </authorList>
    </citation>
    <scope>PROTEIN SEQUENCE</scope>
    <scope>FUNCTION</scope>
    <scope>DISULFIDE BONDS</scope>
    <scope>MASS SPECTROMETRY</scope>
    <source>
        <tissue evidence="3">Seed</tissue>
    </source>
</reference>
<accession>P86973</accession>
<comment type="function">
    <text evidence="3">Antimicrobial peptide active against fungi, Gram-positive and Gram-negative bacteria. Inhibits growth of hyphae in the fungi A.niger (IC(50)=3.5 ug/ml), B.sorokiniana (IC(50)=1.8 ug/ml), F.oxysporum (IC(50)=5.3 ug/ml), F.graminearum (IC(50)=6.9 ug/ml), F.culmorum (IC(50)=6.9 ug/ml) and B.cinerea (IC(50)=13.7 ug/ml). Has no effect on spore germination. Destroys spores in germinated conidia by disruption of cell walls and membranes in A.niger and B.sorokiniana. Causes vacuolization of germinated macro- and microconidia in F.oxysporum, F.graminearum and F.culmorum. Strongly inhibits growth of P.infestans on potato tubers above concentrations of 3.4 ug/ml. Inhibits growth of Gram-positive bacteria C.michiganensis and B.subtilis and of Gram-negative bacteria P.syringae, E.carotovora and E.coli.</text>
</comment>
<comment type="subcellular location">
    <subcellularLocation>
        <location evidence="1">Secreted</location>
    </subcellularLocation>
</comment>
<comment type="PTM">
    <text evidence="3">Contains 4 disulfide bonds.</text>
</comment>
<comment type="mass spectrometry" mass="5492.4" method="MALDI" evidence="3"/>
<comment type="similarity">
    <text evidence="2">Belongs to the DEFL family.</text>
</comment>
<feature type="chain" id="PRO_0000412715" description="Defensin D2">
    <location>
        <begin position="1"/>
        <end position="50"/>
    </location>
</feature>
<feature type="disulfide bond" evidence="1">
    <location>
        <begin position="3"/>
        <end position="50"/>
    </location>
</feature>
<feature type="disulfide bond" evidence="1">
    <location>
        <begin position="14"/>
        <end position="35"/>
    </location>
</feature>
<feature type="disulfide bond" evidence="1">
    <location>
        <begin position="20"/>
        <end position="44"/>
    </location>
</feature>
<feature type="disulfide bond" evidence="1">
    <location>
        <begin position="24"/>
        <end position="46"/>
    </location>
</feature>
<proteinExistence type="evidence at protein level"/>
<organism>
    <name type="scientific">Nigella sativa</name>
    <name type="common">Black cumin</name>
    <dbReference type="NCBI Taxonomy" id="555479"/>
    <lineage>
        <taxon>Eukaryota</taxon>
        <taxon>Viridiplantae</taxon>
        <taxon>Streptophyta</taxon>
        <taxon>Embryophyta</taxon>
        <taxon>Tracheophyta</taxon>
        <taxon>Spermatophyta</taxon>
        <taxon>Magnoliopsida</taxon>
        <taxon>Ranunculales</taxon>
        <taxon>Ranunculaceae</taxon>
        <taxon>Ranunculoideae</taxon>
        <taxon>Nigelleae</taxon>
        <taxon>Nigella</taxon>
    </lineage>
</organism>
<sequence length="50" mass="5503">KFCEKPSGTWSGVCGNSGACKDQCIRLEGAKHGSCNYKLPAHRCICYYEC</sequence>
<protein>
    <recommendedName>
        <fullName evidence="4">Defensin D2</fullName>
        <shortName evidence="4">Ns-D2</shortName>
    </recommendedName>
</protein>